<evidence type="ECO:0000255" key="1">
    <source>
        <dbReference type="HAMAP-Rule" id="MF_00735"/>
    </source>
</evidence>
<comment type="function">
    <text evidence="1">Methylates ribosomal protein L11.</text>
</comment>
<comment type="catalytic activity">
    <reaction evidence="1">
        <text>L-lysyl-[protein] + 3 S-adenosyl-L-methionine = N(6),N(6),N(6)-trimethyl-L-lysyl-[protein] + 3 S-adenosyl-L-homocysteine + 3 H(+)</text>
        <dbReference type="Rhea" id="RHEA:54192"/>
        <dbReference type="Rhea" id="RHEA-COMP:9752"/>
        <dbReference type="Rhea" id="RHEA-COMP:13826"/>
        <dbReference type="ChEBI" id="CHEBI:15378"/>
        <dbReference type="ChEBI" id="CHEBI:29969"/>
        <dbReference type="ChEBI" id="CHEBI:57856"/>
        <dbReference type="ChEBI" id="CHEBI:59789"/>
        <dbReference type="ChEBI" id="CHEBI:61961"/>
    </reaction>
</comment>
<comment type="subcellular location">
    <subcellularLocation>
        <location evidence="1">Cytoplasm</location>
    </subcellularLocation>
</comment>
<comment type="similarity">
    <text evidence="1">Belongs to the methyltransferase superfamily. PrmA family.</text>
</comment>
<organism>
    <name type="scientific">Shewanella denitrificans (strain OS217 / ATCC BAA-1090 / DSM 15013)</name>
    <dbReference type="NCBI Taxonomy" id="318161"/>
    <lineage>
        <taxon>Bacteria</taxon>
        <taxon>Pseudomonadati</taxon>
        <taxon>Pseudomonadota</taxon>
        <taxon>Gammaproteobacteria</taxon>
        <taxon>Alteromonadales</taxon>
        <taxon>Shewanellaceae</taxon>
        <taxon>Shewanella</taxon>
    </lineage>
</organism>
<proteinExistence type="inferred from homology"/>
<dbReference type="EC" id="2.1.1.-" evidence="1"/>
<dbReference type="EMBL" id="CP000302">
    <property type="protein sequence ID" value="ABE53738.1"/>
    <property type="molecule type" value="Genomic_DNA"/>
</dbReference>
<dbReference type="RefSeq" id="WP_011494904.1">
    <property type="nucleotide sequence ID" value="NC_007954.1"/>
</dbReference>
<dbReference type="SMR" id="Q12S38"/>
<dbReference type="STRING" id="318161.Sden_0446"/>
<dbReference type="KEGG" id="sdn:Sden_0446"/>
<dbReference type="eggNOG" id="COG2264">
    <property type="taxonomic scope" value="Bacteria"/>
</dbReference>
<dbReference type="HOGENOM" id="CLU_049382_4_1_6"/>
<dbReference type="OrthoDB" id="9785995at2"/>
<dbReference type="Proteomes" id="UP000001982">
    <property type="component" value="Chromosome"/>
</dbReference>
<dbReference type="GO" id="GO:0005829">
    <property type="term" value="C:cytosol"/>
    <property type="evidence" value="ECO:0007669"/>
    <property type="project" value="TreeGrafter"/>
</dbReference>
<dbReference type="GO" id="GO:0016279">
    <property type="term" value="F:protein-lysine N-methyltransferase activity"/>
    <property type="evidence" value="ECO:0007669"/>
    <property type="project" value="TreeGrafter"/>
</dbReference>
<dbReference type="GO" id="GO:0032259">
    <property type="term" value="P:methylation"/>
    <property type="evidence" value="ECO:0007669"/>
    <property type="project" value="UniProtKB-KW"/>
</dbReference>
<dbReference type="CDD" id="cd02440">
    <property type="entry name" value="AdoMet_MTases"/>
    <property type="match status" value="1"/>
</dbReference>
<dbReference type="Gene3D" id="3.40.50.150">
    <property type="entry name" value="Vaccinia Virus protein VP39"/>
    <property type="match status" value="1"/>
</dbReference>
<dbReference type="HAMAP" id="MF_00735">
    <property type="entry name" value="Methyltr_PrmA"/>
    <property type="match status" value="1"/>
</dbReference>
<dbReference type="InterPro" id="IPR050078">
    <property type="entry name" value="Ribosomal_L11_MeTrfase_PrmA"/>
</dbReference>
<dbReference type="InterPro" id="IPR004498">
    <property type="entry name" value="Ribosomal_PrmA_MeTrfase"/>
</dbReference>
<dbReference type="InterPro" id="IPR029063">
    <property type="entry name" value="SAM-dependent_MTases_sf"/>
</dbReference>
<dbReference type="NCBIfam" id="TIGR00406">
    <property type="entry name" value="prmA"/>
    <property type="match status" value="1"/>
</dbReference>
<dbReference type="PANTHER" id="PTHR43648">
    <property type="entry name" value="ELECTRON TRANSFER FLAVOPROTEIN BETA SUBUNIT LYSINE METHYLTRANSFERASE"/>
    <property type="match status" value="1"/>
</dbReference>
<dbReference type="PANTHER" id="PTHR43648:SF1">
    <property type="entry name" value="ELECTRON TRANSFER FLAVOPROTEIN BETA SUBUNIT LYSINE METHYLTRANSFERASE"/>
    <property type="match status" value="1"/>
</dbReference>
<dbReference type="Pfam" id="PF06325">
    <property type="entry name" value="PrmA"/>
    <property type="match status" value="1"/>
</dbReference>
<dbReference type="PIRSF" id="PIRSF000401">
    <property type="entry name" value="RPL11_MTase"/>
    <property type="match status" value="1"/>
</dbReference>
<dbReference type="SUPFAM" id="SSF53335">
    <property type="entry name" value="S-adenosyl-L-methionine-dependent methyltransferases"/>
    <property type="match status" value="1"/>
</dbReference>
<sequence>MPWIQLRINTNSDHADAIGDILMEQGAVSITYEDGKDTPIFEPKLGETPLWQDTVVVALFDAGTDLAPTVALLATSPMLGENFPHKIEQIEDKDWVREWMDSFHPIQFGTRLWICPSWREIPHPDAVNVILDPGLAFGTGTHPTTALCLEWLDSLDLSDEEVIDFGCGSGILAIAALKLGAKKVTGVDIDYQAIDASQANAVRNNVQDQLALYLPEDQPEGLIADVLVANILAGPLRELAPLIAEKVRQGGKLALSGLLQEQAEELAEFYSQWFQMDPPAYKDDWSRLTGIRK</sequence>
<feature type="chain" id="PRO_1000046086" description="Ribosomal protein L11 methyltransferase">
    <location>
        <begin position="1"/>
        <end position="293"/>
    </location>
</feature>
<feature type="binding site" evidence="1">
    <location>
        <position position="145"/>
    </location>
    <ligand>
        <name>S-adenosyl-L-methionine</name>
        <dbReference type="ChEBI" id="CHEBI:59789"/>
    </ligand>
</feature>
<feature type="binding site" evidence="1">
    <location>
        <position position="166"/>
    </location>
    <ligand>
        <name>S-adenosyl-L-methionine</name>
        <dbReference type="ChEBI" id="CHEBI:59789"/>
    </ligand>
</feature>
<feature type="binding site" evidence="1">
    <location>
        <position position="188"/>
    </location>
    <ligand>
        <name>S-adenosyl-L-methionine</name>
        <dbReference type="ChEBI" id="CHEBI:59789"/>
    </ligand>
</feature>
<feature type="binding site" evidence="1">
    <location>
        <position position="230"/>
    </location>
    <ligand>
        <name>S-adenosyl-L-methionine</name>
        <dbReference type="ChEBI" id="CHEBI:59789"/>
    </ligand>
</feature>
<gene>
    <name evidence="1" type="primary">prmA</name>
    <name type="ordered locus">Sden_0446</name>
</gene>
<reference key="1">
    <citation type="submission" date="2006-03" db="EMBL/GenBank/DDBJ databases">
        <title>Complete sequence of Shewanella denitrificans OS217.</title>
        <authorList>
            <consortium name="US DOE Joint Genome Institute"/>
            <person name="Copeland A."/>
            <person name="Lucas S."/>
            <person name="Lapidus A."/>
            <person name="Barry K."/>
            <person name="Detter J.C."/>
            <person name="Glavina del Rio T."/>
            <person name="Hammon N."/>
            <person name="Israni S."/>
            <person name="Dalin E."/>
            <person name="Tice H."/>
            <person name="Pitluck S."/>
            <person name="Brettin T."/>
            <person name="Bruce D."/>
            <person name="Han C."/>
            <person name="Tapia R."/>
            <person name="Gilna P."/>
            <person name="Kiss H."/>
            <person name="Schmutz J."/>
            <person name="Larimer F."/>
            <person name="Land M."/>
            <person name="Hauser L."/>
            <person name="Kyrpides N."/>
            <person name="Lykidis A."/>
            <person name="Richardson P."/>
        </authorList>
    </citation>
    <scope>NUCLEOTIDE SEQUENCE [LARGE SCALE GENOMIC DNA]</scope>
    <source>
        <strain>OS217 / ATCC BAA-1090 / DSM 15013</strain>
    </source>
</reference>
<accession>Q12S38</accession>
<name>PRMA_SHEDO</name>
<keyword id="KW-0963">Cytoplasm</keyword>
<keyword id="KW-0489">Methyltransferase</keyword>
<keyword id="KW-1185">Reference proteome</keyword>
<keyword id="KW-0949">S-adenosyl-L-methionine</keyword>
<keyword id="KW-0808">Transferase</keyword>
<protein>
    <recommendedName>
        <fullName evidence="1">Ribosomal protein L11 methyltransferase</fullName>
        <shortName evidence="1">L11 Mtase</shortName>
        <ecNumber evidence="1">2.1.1.-</ecNumber>
    </recommendedName>
</protein>